<evidence type="ECO:0000250" key="1"/>
<evidence type="ECO:0000250" key="2">
    <source>
        <dbReference type="UniProtKB" id="P18384"/>
    </source>
</evidence>
<evidence type="ECO:0000255" key="3"/>
<evidence type="ECO:0000305" key="4"/>
<organism>
    <name type="scientific">Vaccinia virus (strain Copenhagen)</name>
    <name type="common">VACV</name>
    <dbReference type="NCBI Taxonomy" id="10249"/>
    <lineage>
        <taxon>Viruses</taxon>
        <taxon>Varidnaviria</taxon>
        <taxon>Bamfordvirae</taxon>
        <taxon>Nucleocytoviricota</taxon>
        <taxon>Pokkesviricetes</taxon>
        <taxon>Chitovirales</taxon>
        <taxon>Poxviridae</taxon>
        <taxon>Chordopoxvirinae</taxon>
        <taxon>Orthopoxvirus</taxon>
        <taxon>Vaccinia virus</taxon>
    </lineage>
</organism>
<gene>
    <name type="primary">OPG040</name>
    <name type="ORF">K2L</name>
    <name type="ORF">SPI-3</name>
</gene>
<organismHost>
    <name type="scientific">Homo sapiens</name>
    <name type="common">Human</name>
    <dbReference type="NCBI Taxonomy" id="9606"/>
</organismHost>
<sequence length="369" mass="42300">MIALLILSLTCSVSTYRLQGFTNAGIVAYKNIQDDNIVFSPFGYSFSMFMSLLPASGNTRIELLKTMDLRKRDLGPAFTELISGLAKLKTSKYTYTDLTYQSFVDNTVCIKPLYYQQYHRFGLYRLNFRRDAVNKINSIVERRSGMSNVVDSNMLDNNTLWAIINTIYFKGTWQYPFDITKTRNASFTNKYGTKTVPMMNVVTKLQGNTITIDDEEYDMVRLPYKDANISMYLAIGDNMTHFTDSITAAKLDYWSFQLGNKVYNLKLPKFSIENKRDIKSIAEMMAPSMFNPDNASFKHMTRDPLYIYKMFQNAKIDVDEQGTVAEASTIMVATARSSPEKLEFNTPFVFIIRHDITGFILFMGKVESP</sequence>
<name>PG040_VACCC</name>
<protein>
    <recommendedName>
        <fullName>Superinfection exclusion protein</fullName>
    </recommendedName>
    <alternativeName>
        <fullName>Protein K2</fullName>
    </alternativeName>
    <alternativeName>
        <fullName>Serine proteinase inhibitor 3</fullName>
    </alternativeName>
</protein>
<dbReference type="EMBL" id="M35027">
    <property type="protein sequence ID" value="AAA48006.1"/>
    <property type="molecule type" value="Genomic_DNA"/>
</dbReference>
<dbReference type="PIR" id="A42505">
    <property type="entry name" value="WMVZ1E"/>
</dbReference>
<dbReference type="SMR" id="P20532"/>
<dbReference type="MEROPS" id="I04.047"/>
<dbReference type="Proteomes" id="UP000008269">
    <property type="component" value="Segment"/>
</dbReference>
<dbReference type="GO" id="GO:0005615">
    <property type="term" value="C:extracellular space"/>
    <property type="evidence" value="ECO:0007669"/>
    <property type="project" value="InterPro"/>
</dbReference>
<dbReference type="GO" id="GO:0020002">
    <property type="term" value="C:host cell plasma membrane"/>
    <property type="evidence" value="ECO:0007669"/>
    <property type="project" value="UniProtKB-SubCell"/>
</dbReference>
<dbReference type="GO" id="GO:0016020">
    <property type="term" value="C:membrane"/>
    <property type="evidence" value="ECO:0007669"/>
    <property type="project" value="UniProtKB-KW"/>
</dbReference>
<dbReference type="GO" id="GO:0055036">
    <property type="term" value="C:virion membrane"/>
    <property type="evidence" value="ECO:0007669"/>
    <property type="project" value="UniProtKB-SubCell"/>
</dbReference>
<dbReference type="GO" id="GO:0004867">
    <property type="term" value="F:serine-type endopeptidase inhibitor activity"/>
    <property type="evidence" value="ECO:0007669"/>
    <property type="project" value="UniProtKB-KW"/>
</dbReference>
<dbReference type="CDD" id="cd19584">
    <property type="entry name" value="serpinO_SPI-3_virus"/>
    <property type="match status" value="1"/>
</dbReference>
<dbReference type="Gene3D" id="2.30.39.10">
    <property type="entry name" value="Alpha-1-antitrypsin, domain 1"/>
    <property type="match status" value="1"/>
</dbReference>
<dbReference type="Gene3D" id="3.30.497.10">
    <property type="entry name" value="Antithrombin, subunit I, domain 2"/>
    <property type="match status" value="1"/>
</dbReference>
<dbReference type="InterPro" id="IPR023796">
    <property type="entry name" value="Serpin_dom"/>
</dbReference>
<dbReference type="InterPro" id="IPR000215">
    <property type="entry name" value="Serpin_fam"/>
</dbReference>
<dbReference type="InterPro" id="IPR036186">
    <property type="entry name" value="Serpin_sf"/>
</dbReference>
<dbReference type="InterPro" id="IPR042178">
    <property type="entry name" value="Serpin_sf_1"/>
</dbReference>
<dbReference type="InterPro" id="IPR042185">
    <property type="entry name" value="Serpin_sf_2"/>
</dbReference>
<dbReference type="PANTHER" id="PTHR11461:SF211">
    <property type="entry name" value="GH10112P-RELATED"/>
    <property type="match status" value="1"/>
</dbReference>
<dbReference type="PANTHER" id="PTHR11461">
    <property type="entry name" value="SERINE PROTEASE INHIBITOR, SERPIN"/>
    <property type="match status" value="1"/>
</dbReference>
<dbReference type="Pfam" id="PF00079">
    <property type="entry name" value="Serpin"/>
    <property type="match status" value="1"/>
</dbReference>
<dbReference type="SMART" id="SM00093">
    <property type="entry name" value="SERPIN"/>
    <property type="match status" value="1"/>
</dbReference>
<dbReference type="SUPFAM" id="SSF56574">
    <property type="entry name" value="Serpins"/>
    <property type="match status" value="1"/>
</dbReference>
<accession>P20532</accession>
<comment type="function">
    <text evidence="1">Prevents cell to cell fusion via its interaction with A56 protein. The A56-K2 complex associates with components of the entry fusion complex (EFC) presumably to avoid superinfection and syncytium formation (By similarity).</text>
</comment>
<comment type="subunit">
    <text evidence="1">Interacts with A56 protein.</text>
</comment>
<comment type="subcellular location">
    <subcellularLocation>
        <location evidence="1">Virion membrane</location>
        <topology evidence="1">Peripheral membrane protein</topology>
    </subcellularLocation>
    <subcellularLocation>
        <location evidence="1">Host cell membrane</location>
        <topology evidence="1">Peripheral membrane protein</topology>
        <orientation evidence="1">Extracellular side</orientation>
    </subcellularLocation>
    <text evidence="1">Component of extracellular enveloped virus (EEV) but not intracellular mature virus (IMV). Anchored to the surface of the outermost membrane of EEV via its interaction with A56 protein (By similarity).</text>
</comment>
<comment type="induction">
    <text evidence="2">Expressed in the intermediate phase of the viral replicative cycle.</text>
</comment>
<comment type="similarity">
    <text evidence="4">Belongs to the serpin family. Orthopoxvirus OPG040 subfamily.</text>
</comment>
<keyword id="KW-1032">Host cell membrane</keyword>
<keyword id="KW-1043">Host membrane</keyword>
<keyword id="KW-0472">Membrane</keyword>
<keyword id="KW-0646">Protease inhibitor</keyword>
<keyword id="KW-1185">Reference proteome</keyword>
<keyword id="KW-0722">Serine protease inhibitor</keyword>
<keyword id="KW-0732">Signal</keyword>
<keyword id="KW-0946">Virion</keyword>
<reference key="1">
    <citation type="journal article" date="1990" name="Virology">
        <title>The complete DNA sequence of vaccinia virus.</title>
        <authorList>
            <person name="Goebel S.J."/>
            <person name="Johnson G.P."/>
            <person name="Perkus M.E."/>
            <person name="Davis S.W."/>
            <person name="Winslow J.P."/>
            <person name="Paoletti E."/>
        </authorList>
    </citation>
    <scope>NUCLEOTIDE SEQUENCE [LARGE SCALE GENOMIC DNA]</scope>
</reference>
<reference key="2">
    <citation type="journal article" date="1990" name="Virology">
        <title>Appendix to 'The complete DNA sequence of vaccinia virus'.</title>
        <authorList>
            <person name="Goebel S.J."/>
            <person name="Johnson G.P."/>
            <person name="Perkus M.E."/>
            <person name="Davis S.W."/>
            <person name="Winslow J.P."/>
            <person name="Paoletti E."/>
        </authorList>
    </citation>
    <scope>NUCLEOTIDE SEQUENCE [LARGE SCALE GENOMIC DNA]</scope>
</reference>
<reference key="3">
    <citation type="journal article" date="2011" name="J. Gen. Virol.">
        <title>The vaccinia virus A56 protein: a multifunctional transmembrane glycoprotein that anchors two secreted viral proteins.</title>
        <authorList>
            <person name="Dehaven B.C."/>
            <person name="Gupta K."/>
            <person name="Isaacs S.N."/>
        </authorList>
    </citation>
    <scope>INTERACTION WITH A56</scope>
    <scope>SUBCELLULAR LOCATION</scope>
</reference>
<proteinExistence type="evidence at protein level"/>
<feature type="signal peptide" evidence="3">
    <location>
        <begin position="1"/>
        <end position="15"/>
    </location>
</feature>
<feature type="chain" id="PRO_0000094151" description="Superinfection exclusion protein">
    <location>
        <begin position="16"/>
        <end position="369"/>
    </location>
</feature>